<evidence type="ECO:0000250" key="1"/>
<evidence type="ECO:0000250" key="2">
    <source>
        <dbReference type="UniProtKB" id="Q6ISU1"/>
    </source>
</evidence>
<evidence type="ECO:0000255" key="3"/>
<evidence type="ECO:0000256" key="4">
    <source>
        <dbReference type="SAM" id="MobiDB-lite"/>
    </source>
</evidence>
<evidence type="ECO:0000305" key="5"/>
<accession>Q0VCS0</accession>
<reference key="1">
    <citation type="submission" date="2006-08" db="EMBL/GenBank/DDBJ databases">
        <authorList>
            <consortium name="NIH - Mammalian Gene Collection (MGC) project"/>
        </authorList>
    </citation>
    <scope>NUCLEOTIDE SEQUENCE [LARGE SCALE MRNA]</scope>
    <source>
        <strain>Hereford</strain>
        <tissue>Thymus</tissue>
    </source>
</reference>
<organism>
    <name type="scientific">Bos taurus</name>
    <name type="common">Bovine</name>
    <dbReference type="NCBI Taxonomy" id="9913"/>
    <lineage>
        <taxon>Eukaryota</taxon>
        <taxon>Metazoa</taxon>
        <taxon>Chordata</taxon>
        <taxon>Craniata</taxon>
        <taxon>Vertebrata</taxon>
        <taxon>Euteleostomi</taxon>
        <taxon>Mammalia</taxon>
        <taxon>Eutheria</taxon>
        <taxon>Laurasiatheria</taxon>
        <taxon>Artiodactyla</taxon>
        <taxon>Ruminantia</taxon>
        <taxon>Pecora</taxon>
        <taxon>Bovidae</taxon>
        <taxon>Bovinae</taxon>
        <taxon>Bos</taxon>
    </lineage>
</organism>
<comment type="function">
    <text evidence="2">Component of the pre-T-cell receptor complex (composed of PTCRA, TCRB and the CD3 complex) that has a crucial role in early T-cell development, particularly alpha-beta T cell differentiation.</text>
</comment>
<comment type="subunit">
    <text evidence="2">Heterodimer with TCRB; disulfide linked. This heterodimer assembles with CD3 proteins into a signaling-competent pre-T-cell receptor complex. Interacts with RHBDD1.</text>
</comment>
<comment type="subcellular location">
    <subcellularLocation>
        <location evidence="5">Membrane</location>
        <topology evidence="5">Single-pass type I membrane protein</topology>
    </subcellularLocation>
    <subcellularLocation>
        <location evidence="2">Cell membrane</location>
    </subcellularLocation>
</comment>
<gene>
    <name type="primary">PTCRA</name>
</gene>
<protein>
    <recommendedName>
        <fullName>Pre T-cell antigen receptor alpha</fullName>
        <shortName>pT-alpha</shortName>
        <shortName>pTa</shortName>
    </recommendedName>
    <alternativeName>
        <fullName>pT-alpha-TCR</fullName>
    </alternativeName>
</protein>
<sequence>MAESWLLLLLALGCPALPTEVTTLLRPAQQGMGSTPFPSLAPPITLLVDGKQQTLVVCLVLDVAPPGFESPIWFSAGNGSSLDAFTYGPSPAEDGTWTRLAQLSLYSEELAAWDTLVCHTGPGAGDHGQSTQPLQLSGDASSARTCLWEPLRGTRALVLRLGALRLLLFKLLLLDVLLTCGRLHAPPAARGDPAGASGPGAPSLPAPHEVPRADSRLLPQPPPPRGSSSGPADRIRRNHGGTTGRGLSVSASPPLEPRDRRRRVHTRRPRRDPRNPVWEEGPPVLRAWSSGPSFSLSTSSLGAFLCNLPPPADPSFPGG</sequence>
<dbReference type="EMBL" id="BC120034">
    <property type="protein sequence ID" value="AAI20035.1"/>
    <property type="molecule type" value="mRNA"/>
</dbReference>
<dbReference type="RefSeq" id="NP_001069101.1">
    <property type="nucleotide sequence ID" value="NM_001075633.1"/>
</dbReference>
<dbReference type="SMR" id="Q0VCS0"/>
<dbReference type="FunCoup" id="Q0VCS0">
    <property type="interactions" value="36"/>
</dbReference>
<dbReference type="STRING" id="9913.ENSBTAP00000044273"/>
<dbReference type="GlyCosmos" id="Q0VCS0">
    <property type="glycosylation" value="1 site, No reported glycans"/>
</dbReference>
<dbReference type="GlyGen" id="Q0VCS0">
    <property type="glycosylation" value="1 site"/>
</dbReference>
<dbReference type="PaxDb" id="9913-ENSBTAP00000044273"/>
<dbReference type="Ensembl" id="ENSBTAT00000047035.2">
    <property type="protein sequence ID" value="ENSBTAP00000044273.1"/>
    <property type="gene ID" value="ENSBTAG00000017097.7"/>
</dbReference>
<dbReference type="GeneID" id="513669"/>
<dbReference type="KEGG" id="bta:513669"/>
<dbReference type="CTD" id="171558"/>
<dbReference type="VEuPathDB" id="HostDB:ENSBTAG00000017097"/>
<dbReference type="VGNC" id="VGNC:33494">
    <property type="gene designation" value="PTCRA"/>
</dbReference>
<dbReference type="eggNOG" id="ENOG502SAGI">
    <property type="taxonomic scope" value="Eukaryota"/>
</dbReference>
<dbReference type="GeneTree" id="ENSGT00390000007712"/>
<dbReference type="HOGENOM" id="CLU_082600_0_0_1"/>
<dbReference type="InParanoid" id="Q0VCS0"/>
<dbReference type="OMA" id="DPIRRNH"/>
<dbReference type="OrthoDB" id="8930604at2759"/>
<dbReference type="TreeFam" id="TF337868"/>
<dbReference type="Proteomes" id="UP000009136">
    <property type="component" value="Chromosome 23"/>
</dbReference>
<dbReference type="Bgee" id="ENSBTAG00000017097">
    <property type="expression patterns" value="Expressed in thymus and 26 other cell types or tissues"/>
</dbReference>
<dbReference type="GO" id="GO:0005886">
    <property type="term" value="C:plasma membrane"/>
    <property type="evidence" value="ECO:0000250"/>
    <property type="project" value="UniProtKB"/>
</dbReference>
<dbReference type="GO" id="GO:0046632">
    <property type="term" value="P:alpha-beta T cell differentiation"/>
    <property type="evidence" value="ECO:0000250"/>
    <property type="project" value="UniProtKB"/>
</dbReference>
<dbReference type="GO" id="GO:0070244">
    <property type="term" value="P:negative regulation of thymocyte apoptotic process"/>
    <property type="evidence" value="ECO:0000318"/>
    <property type="project" value="GO_Central"/>
</dbReference>
<dbReference type="FunFam" id="2.60.40.10:FF:001091">
    <property type="entry name" value="Pre T-cell antigen receptor alpha"/>
    <property type="match status" value="1"/>
</dbReference>
<dbReference type="Gene3D" id="2.60.40.10">
    <property type="entry name" value="Immunoglobulins"/>
    <property type="match status" value="1"/>
</dbReference>
<dbReference type="InterPro" id="IPR036179">
    <property type="entry name" value="Ig-like_dom_sf"/>
</dbReference>
<dbReference type="InterPro" id="IPR013783">
    <property type="entry name" value="Ig-like_fold"/>
</dbReference>
<dbReference type="InterPro" id="IPR027834">
    <property type="entry name" value="PTCRA"/>
</dbReference>
<dbReference type="PANTHER" id="PTHR37866">
    <property type="entry name" value="PRE T-CELL ANTIGEN RECEPTOR ALPHA"/>
    <property type="match status" value="1"/>
</dbReference>
<dbReference type="PANTHER" id="PTHR37866:SF1">
    <property type="entry name" value="PRE T-CELL ANTIGEN RECEPTOR ALPHA"/>
    <property type="match status" value="1"/>
</dbReference>
<dbReference type="Pfam" id="PF15028">
    <property type="entry name" value="PTCRA"/>
    <property type="match status" value="1"/>
</dbReference>
<dbReference type="SUPFAM" id="SSF48726">
    <property type="entry name" value="Immunoglobulin"/>
    <property type="match status" value="1"/>
</dbReference>
<proteinExistence type="evidence at transcript level"/>
<keyword id="KW-1003">Cell membrane</keyword>
<keyword id="KW-1015">Disulfide bond</keyword>
<keyword id="KW-0325">Glycoprotein</keyword>
<keyword id="KW-0472">Membrane</keyword>
<keyword id="KW-0675">Receptor</keyword>
<keyword id="KW-1185">Reference proteome</keyword>
<keyword id="KW-0732">Signal</keyword>
<keyword id="KW-0812">Transmembrane</keyword>
<keyword id="KW-1133">Transmembrane helix</keyword>
<name>PTCRA_BOVIN</name>
<feature type="signal peptide" evidence="3">
    <location>
        <begin position="1"/>
        <end position="16"/>
    </location>
</feature>
<feature type="chain" id="PRO_0000319107" description="Pre T-cell antigen receptor alpha">
    <location>
        <begin position="17"/>
        <end position="319"/>
    </location>
</feature>
<feature type="topological domain" description="Extracellular" evidence="3">
    <location>
        <begin position="17"/>
        <end position="160"/>
    </location>
</feature>
<feature type="transmembrane region" description="Helical" evidence="3">
    <location>
        <begin position="161"/>
        <end position="181"/>
    </location>
</feature>
<feature type="topological domain" description="Cytoplasmic" evidence="3">
    <location>
        <begin position="182"/>
        <end position="319"/>
    </location>
</feature>
<feature type="region of interest" description="Disordered" evidence="4">
    <location>
        <begin position="189"/>
        <end position="293"/>
    </location>
</feature>
<feature type="compositionally biased region" description="Low complexity" evidence="4">
    <location>
        <begin position="189"/>
        <end position="207"/>
    </location>
</feature>
<feature type="compositionally biased region" description="Basic residues" evidence="4">
    <location>
        <begin position="260"/>
        <end position="271"/>
    </location>
</feature>
<feature type="glycosylation site" description="N-linked (GlcNAc...) asparagine" evidence="3">
    <location>
        <position position="78"/>
    </location>
</feature>
<feature type="disulfide bond" evidence="1">
    <location>
        <begin position="58"/>
        <end position="118"/>
    </location>
</feature>
<feature type="disulfide bond" description="Interchain (with TCRB)" evidence="1">
    <location>
        <position position="146"/>
    </location>
</feature>